<dbReference type="EMBL" id="AAFI02000187">
    <property type="protein sequence ID" value="EAL61373.1"/>
    <property type="molecule type" value="Genomic_DNA"/>
</dbReference>
<dbReference type="RefSeq" id="XP_629781.1">
    <property type="nucleotide sequence ID" value="XM_629779.1"/>
</dbReference>
<dbReference type="SMR" id="Q54DU1"/>
<dbReference type="FunCoup" id="Q54DU1">
    <property type="interactions" value="114"/>
</dbReference>
<dbReference type="STRING" id="44689.Q54DU1"/>
<dbReference type="PaxDb" id="44689-DDB0234093"/>
<dbReference type="EnsemblProtists" id="EAL61373">
    <property type="protein sequence ID" value="EAL61373"/>
    <property type="gene ID" value="DDB_G0292034"/>
</dbReference>
<dbReference type="GeneID" id="8628458"/>
<dbReference type="KEGG" id="ddi:DDB_G0292034"/>
<dbReference type="dictyBase" id="DDB_G0292034">
    <property type="gene designation" value="mcfP"/>
</dbReference>
<dbReference type="VEuPathDB" id="AmoebaDB:DDB_G0292034"/>
<dbReference type="eggNOG" id="KOG0752">
    <property type="taxonomic scope" value="Eukaryota"/>
</dbReference>
<dbReference type="HOGENOM" id="CLU_015166_10_1_1"/>
<dbReference type="InParanoid" id="Q54DU1"/>
<dbReference type="OMA" id="VYERMKW"/>
<dbReference type="PhylomeDB" id="Q54DU1"/>
<dbReference type="Reactome" id="R-DDI-199220">
    <property type="pathway name" value="Vitamin B5 (pantothenate) metabolism"/>
</dbReference>
<dbReference type="PRO" id="PR:Q54DU1"/>
<dbReference type="Proteomes" id="UP000002195">
    <property type="component" value="Chromosome 6"/>
</dbReference>
<dbReference type="GO" id="GO:0005743">
    <property type="term" value="C:mitochondrial inner membrane"/>
    <property type="evidence" value="ECO:0000318"/>
    <property type="project" value="GO_Central"/>
</dbReference>
<dbReference type="GO" id="GO:0015228">
    <property type="term" value="F:coenzyme A transmembrane transporter activity"/>
    <property type="evidence" value="ECO:0000250"/>
    <property type="project" value="dictyBase"/>
</dbReference>
<dbReference type="GO" id="GO:0015880">
    <property type="term" value="P:coenzyme A transport"/>
    <property type="evidence" value="ECO:0000250"/>
    <property type="project" value="dictyBase"/>
</dbReference>
<dbReference type="GO" id="GO:1990559">
    <property type="term" value="P:mitochondrial coenzyme A transmembrane transport"/>
    <property type="evidence" value="ECO:0000318"/>
    <property type="project" value="GO_Central"/>
</dbReference>
<dbReference type="Gene3D" id="1.50.40.10">
    <property type="entry name" value="Mitochondrial carrier domain"/>
    <property type="match status" value="1"/>
</dbReference>
<dbReference type="InterPro" id="IPR002167">
    <property type="entry name" value="GDC-like"/>
</dbReference>
<dbReference type="InterPro" id="IPR002067">
    <property type="entry name" value="Mit_carrier"/>
</dbReference>
<dbReference type="InterPro" id="IPR018108">
    <property type="entry name" value="Mitochondrial_sb/sol_carrier"/>
</dbReference>
<dbReference type="InterPro" id="IPR023395">
    <property type="entry name" value="Mt_carrier_dom_sf"/>
</dbReference>
<dbReference type="PANTHER" id="PTHR24089">
    <property type="entry name" value="SOLUTE CARRIER FAMILY 25"/>
    <property type="match status" value="1"/>
</dbReference>
<dbReference type="Pfam" id="PF00153">
    <property type="entry name" value="Mito_carr"/>
    <property type="match status" value="3"/>
</dbReference>
<dbReference type="PRINTS" id="PR00928">
    <property type="entry name" value="GRAVESDC"/>
</dbReference>
<dbReference type="PRINTS" id="PR00926">
    <property type="entry name" value="MITOCARRIER"/>
</dbReference>
<dbReference type="SUPFAM" id="SSF103506">
    <property type="entry name" value="Mitochondrial carrier"/>
    <property type="match status" value="1"/>
</dbReference>
<dbReference type="PROSITE" id="PS50920">
    <property type="entry name" value="SOLCAR"/>
    <property type="match status" value="3"/>
</dbReference>
<name>MCFP_DICDI</name>
<organism>
    <name type="scientific">Dictyostelium discoideum</name>
    <name type="common">Social amoeba</name>
    <dbReference type="NCBI Taxonomy" id="44689"/>
    <lineage>
        <taxon>Eukaryota</taxon>
        <taxon>Amoebozoa</taxon>
        <taxon>Evosea</taxon>
        <taxon>Eumycetozoa</taxon>
        <taxon>Dictyostelia</taxon>
        <taxon>Dictyosteliales</taxon>
        <taxon>Dictyosteliaceae</taxon>
        <taxon>Dictyostelium</taxon>
    </lineage>
</organism>
<protein>
    <recommendedName>
        <fullName>Mitochondrial substrate carrier family protein P</fullName>
    </recommendedName>
    <alternativeName>
        <fullName>Solute carrier family 25 member 16 homolog A</fullName>
    </alternativeName>
</protein>
<comment type="function">
    <text evidence="1">Mitochondrial solute carriers shuttle metabolites, nucleotides, and cofactors through the mitochondrial inner membrane. Required for the accumulation of coenzyme A in the mitochondrial matrix (By similarity).</text>
</comment>
<comment type="subcellular location">
    <subcellularLocation>
        <location evidence="1">Mitochondrion inner membrane</location>
        <topology evidence="1">Multi-pass membrane protein</topology>
    </subcellularLocation>
</comment>
<comment type="similarity">
    <text evidence="3">Belongs to the mitochondrial carrier (TC 2.A.29) family.</text>
</comment>
<feature type="chain" id="PRO_0000329429" description="Mitochondrial substrate carrier family protein P">
    <location>
        <begin position="1"/>
        <end position="297"/>
    </location>
</feature>
<feature type="transmembrane region" description="Helical; Name=1" evidence="2">
    <location>
        <begin position="15"/>
        <end position="35"/>
    </location>
</feature>
<feature type="transmembrane region" description="Helical; Name=2" evidence="2">
    <location>
        <begin position="66"/>
        <end position="86"/>
    </location>
</feature>
<feature type="transmembrane region" description="Helical; Name=3" evidence="2">
    <location>
        <begin position="107"/>
        <end position="127"/>
    </location>
</feature>
<feature type="transmembrane region" description="Helical; Name=4" evidence="2">
    <location>
        <begin position="165"/>
        <end position="185"/>
    </location>
</feature>
<feature type="transmembrane region" description="Helical; Name=5" evidence="2">
    <location>
        <begin position="207"/>
        <end position="227"/>
    </location>
</feature>
<feature type="transmembrane region" description="Helical; Name=6" evidence="2">
    <location>
        <begin position="262"/>
        <end position="282"/>
    </location>
</feature>
<feature type="repeat" description="Solcar 1">
    <location>
        <begin position="12"/>
        <end position="98"/>
    </location>
</feature>
<feature type="repeat" description="Solcar 2">
    <location>
        <begin position="104"/>
        <end position="189"/>
    </location>
</feature>
<feature type="repeat" description="Solcar 3">
    <location>
        <begin position="201"/>
        <end position="293"/>
    </location>
</feature>
<sequence>MATTSVSSPKSKPSWVSFLSGGLAGVTAKSAVAPLERVKILYQIKSELYSLNSVYGSMLKIVENEGIKGLWRGNSATILRVFPYAAVQFLSYETIKNHLVADKSSSFQIFLAGSAAGGIAVCATYPLDLLRARLAIEIHKKPTKPHHLLKSTFTKDGVKGIYRGIQPTLIGILPYGGISFSTFEFLKRIAPLNEIDENGQISGTYKLIAGGIAGGVAQTVAYPFDVVRRRVQTHGFGDAKAVVNLEHGTLRTIAHILKEEGILALYKGLSINYVKVIPTASIAFYTYEYLSNFFNKL</sequence>
<evidence type="ECO:0000250" key="1"/>
<evidence type="ECO:0000255" key="2"/>
<evidence type="ECO:0000305" key="3"/>
<keyword id="KW-0472">Membrane</keyword>
<keyword id="KW-0496">Mitochondrion</keyword>
<keyword id="KW-0999">Mitochondrion inner membrane</keyword>
<keyword id="KW-1185">Reference proteome</keyword>
<keyword id="KW-0677">Repeat</keyword>
<keyword id="KW-0812">Transmembrane</keyword>
<keyword id="KW-1133">Transmembrane helix</keyword>
<keyword id="KW-0813">Transport</keyword>
<accession>Q54DU1</accession>
<reference key="1">
    <citation type="journal article" date="2005" name="Nature">
        <title>The genome of the social amoeba Dictyostelium discoideum.</title>
        <authorList>
            <person name="Eichinger L."/>
            <person name="Pachebat J.A."/>
            <person name="Gloeckner G."/>
            <person name="Rajandream M.A."/>
            <person name="Sucgang R."/>
            <person name="Berriman M."/>
            <person name="Song J."/>
            <person name="Olsen R."/>
            <person name="Szafranski K."/>
            <person name="Xu Q."/>
            <person name="Tunggal B."/>
            <person name="Kummerfeld S."/>
            <person name="Madera M."/>
            <person name="Konfortov B.A."/>
            <person name="Rivero F."/>
            <person name="Bankier A.T."/>
            <person name="Lehmann R."/>
            <person name="Hamlin N."/>
            <person name="Davies R."/>
            <person name="Gaudet P."/>
            <person name="Fey P."/>
            <person name="Pilcher K."/>
            <person name="Chen G."/>
            <person name="Saunders D."/>
            <person name="Sodergren E.J."/>
            <person name="Davis P."/>
            <person name="Kerhornou A."/>
            <person name="Nie X."/>
            <person name="Hall N."/>
            <person name="Anjard C."/>
            <person name="Hemphill L."/>
            <person name="Bason N."/>
            <person name="Farbrother P."/>
            <person name="Desany B."/>
            <person name="Just E."/>
            <person name="Morio T."/>
            <person name="Rost R."/>
            <person name="Churcher C.M."/>
            <person name="Cooper J."/>
            <person name="Haydock S."/>
            <person name="van Driessche N."/>
            <person name="Cronin A."/>
            <person name="Goodhead I."/>
            <person name="Muzny D.M."/>
            <person name="Mourier T."/>
            <person name="Pain A."/>
            <person name="Lu M."/>
            <person name="Harper D."/>
            <person name="Lindsay R."/>
            <person name="Hauser H."/>
            <person name="James K.D."/>
            <person name="Quiles M."/>
            <person name="Madan Babu M."/>
            <person name="Saito T."/>
            <person name="Buchrieser C."/>
            <person name="Wardroper A."/>
            <person name="Felder M."/>
            <person name="Thangavelu M."/>
            <person name="Johnson D."/>
            <person name="Knights A."/>
            <person name="Loulseged H."/>
            <person name="Mungall K.L."/>
            <person name="Oliver K."/>
            <person name="Price C."/>
            <person name="Quail M.A."/>
            <person name="Urushihara H."/>
            <person name="Hernandez J."/>
            <person name="Rabbinowitsch E."/>
            <person name="Steffen D."/>
            <person name="Sanders M."/>
            <person name="Ma J."/>
            <person name="Kohara Y."/>
            <person name="Sharp S."/>
            <person name="Simmonds M.N."/>
            <person name="Spiegler S."/>
            <person name="Tivey A."/>
            <person name="Sugano S."/>
            <person name="White B."/>
            <person name="Walker D."/>
            <person name="Woodward J.R."/>
            <person name="Winckler T."/>
            <person name="Tanaka Y."/>
            <person name="Shaulsky G."/>
            <person name="Schleicher M."/>
            <person name="Weinstock G.M."/>
            <person name="Rosenthal A."/>
            <person name="Cox E.C."/>
            <person name="Chisholm R.L."/>
            <person name="Gibbs R.A."/>
            <person name="Loomis W.F."/>
            <person name="Platzer M."/>
            <person name="Kay R.R."/>
            <person name="Williams J.G."/>
            <person name="Dear P.H."/>
            <person name="Noegel A.A."/>
            <person name="Barrell B.G."/>
            <person name="Kuspa A."/>
        </authorList>
    </citation>
    <scope>NUCLEOTIDE SEQUENCE [LARGE SCALE GENOMIC DNA]</scope>
    <source>
        <strain>AX4</strain>
    </source>
</reference>
<reference key="2">
    <citation type="journal article" date="2007" name="Biochimie">
        <title>Mitochondrial carrier family: repertoire and peculiarities of the cellular slime mould Dictyostelium discoideum.</title>
        <authorList>
            <person name="Satre M."/>
            <person name="Mattei S."/>
            <person name="Aubry L."/>
            <person name="Gaudet P."/>
            <person name="Pelosi L."/>
            <person name="Brandolin G."/>
            <person name="Klein G."/>
        </authorList>
    </citation>
    <scope>REVIEW</scope>
</reference>
<gene>
    <name type="primary">mcfP</name>
    <name type="synonym">slc25a16A</name>
    <name type="ORF">DDB_G0292034</name>
</gene>
<proteinExistence type="inferred from homology"/>